<dbReference type="EC" id="4.2.1.11" evidence="1"/>
<dbReference type="EMBL" id="BX571856">
    <property type="protein sequence ID" value="CAG39841.1"/>
    <property type="molecule type" value="Genomic_DNA"/>
</dbReference>
<dbReference type="RefSeq" id="WP_001121760.1">
    <property type="nucleotide sequence ID" value="NC_002952.2"/>
</dbReference>
<dbReference type="SMR" id="Q6GIL4"/>
<dbReference type="IntAct" id="Q6GIL4">
    <property type="interactions" value="3"/>
</dbReference>
<dbReference type="KEGG" id="sar:SAR0832"/>
<dbReference type="HOGENOM" id="CLU_031223_2_1_9"/>
<dbReference type="UniPathway" id="UPA00109">
    <property type="reaction ID" value="UER00187"/>
</dbReference>
<dbReference type="Proteomes" id="UP000000596">
    <property type="component" value="Chromosome"/>
</dbReference>
<dbReference type="GO" id="GO:0009986">
    <property type="term" value="C:cell surface"/>
    <property type="evidence" value="ECO:0007669"/>
    <property type="project" value="UniProtKB-SubCell"/>
</dbReference>
<dbReference type="GO" id="GO:0005576">
    <property type="term" value="C:extracellular region"/>
    <property type="evidence" value="ECO:0007669"/>
    <property type="project" value="UniProtKB-SubCell"/>
</dbReference>
<dbReference type="GO" id="GO:0000015">
    <property type="term" value="C:phosphopyruvate hydratase complex"/>
    <property type="evidence" value="ECO:0007669"/>
    <property type="project" value="InterPro"/>
</dbReference>
<dbReference type="GO" id="GO:0000287">
    <property type="term" value="F:magnesium ion binding"/>
    <property type="evidence" value="ECO:0007669"/>
    <property type="project" value="UniProtKB-UniRule"/>
</dbReference>
<dbReference type="GO" id="GO:0004634">
    <property type="term" value="F:phosphopyruvate hydratase activity"/>
    <property type="evidence" value="ECO:0007669"/>
    <property type="project" value="UniProtKB-UniRule"/>
</dbReference>
<dbReference type="GO" id="GO:0006096">
    <property type="term" value="P:glycolytic process"/>
    <property type="evidence" value="ECO:0007669"/>
    <property type="project" value="UniProtKB-UniRule"/>
</dbReference>
<dbReference type="CDD" id="cd03313">
    <property type="entry name" value="enolase"/>
    <property type="match status" value="1"/>
</dbReference>
<dbReference type="FunFam" id="3.20.20.120:FF:000001">
    <property type="entry name" value="Enolase"/>
    <property type="match status" value="1"/>
</dbReference>
<dbReference type="FunFam" id="3.30.390.10:FF:000001">
    <property type="entry name" value="Enolase"/>
    <property type="match status" value="1"/>
</dbReference>
<dbReference type="Gene3D" id="3.20.20.120">
    <property type="entry name" value="Enolase-like C-terminal domain"/>
    <property type="match status" value="1"/>
</dbReference>
<dbReference type="Gene3D" id="3.30.390.10">
    <property type="entry name" value="Enolase-like, N-terminal domain"/>
    <property type="match status" value="1"/>
</dbReference>
<dbReference type="HAMAP" id="MF_00318">
    <property type="entry name" value="Enolase"/>
    <property type="match status" value="1"/>
</dbReference>
<dbReference type="InterPro" id="IPR000941">
    <property type="entry name" value="Enolase"/>
</dbReference>
<dbReference type="InterPro" id="IPR036849">
    <property type="entry name" value="Enolase-like_C_sf"/>
</dbReference>
<dbReference type="InterPro" id="IPR029017">
    <property type="entry name" value="Enolase-like_N"/>
</dbReference>
<dbReference type="InterPro" id="IPR020810">
    <property type="entry name" value="Enolase_C"/>
</dbReference>
<dbReference type="InterPro" id="IPR020809">
    <property type="entry name" value="Enolase_CS"/>
</dbReference>
<dbReference type="InterPro" id="IPR020811">
    <property type="entry name" value="Enolase_N"/>
</dbReference>
<dbReference type="NCBIfam" id="TIGR01060">
    <property type="entry name" value="eno"/>
    <property type="match status" value="1"/>
</dbReference>
<dbReference type="PANTHER" id="PTHR11902">
    <property type="entry name" value="ENOLASE"/>
    <property type="match status" value="1"/>
</dbReference>
<dbReference type="PANTHER" id="PTHR11902:SF1">
    <property type="entry name" value="ENOLASE"/>
    <property type="match status" value="1"/>
</dbReference>
<dbReference type="Pfam" id="PF00113">
    <property type="entry name" value="Enolase_C"/>
    <property type="match status" value="1"/>
</dbReference>
<dbReference type="Pfam" id="PF03952">
    <property type="entry name" value="Enolase_N"/>
    <property type="match status" value="1"/>
</dbReference>
<dbReference type="PIRSF" id="PIRSF001400">
    <property type="entry name" value="Enolase"/>
    <property type="match status" value="1"/>
</dbReference>
<dbReference type="PRINTS" id="PR00148">
    <property type="entry name" value="ENOLASE"/>
</dbReference>
<dbReference type="SFLD" id="SFLDF00002">
    <property type="entry name" value="enolase"/>
    <property type="match status" value="1"/>
</dbReference>
<dbReference type="SFLD" id="SFLDG00178">
    <property type="entry name" value="enolase"/>
    <property type="match status" value="1"/>
</dbReference>
<dbReference type="SMART" id="SM01192">
    <property type="entry name" value="Enolase_C"/>
    <property type="match status" value="1"/>
</dbReference>
<dbReference type="SMART" id="SM01193">
    <property type="entry name" value="Enolase_N"/>
    <property type="match status" value="1"/>
</dbReference>
<dbReference type="SUPFAM" id="SSF51604">
    <property type="entry name" value="Enolase C-terminal domain-like"/>
    <property type="match status" value="1"/>
</dbReference>
<dbReference type="SUPFAM" id="SSF54826">
    <property type="entry name" value="Enolase N-terminal domain-like"/>
    <property type="match status" value="1"/>
</dbReference>
<dbReference type="PROSITE" id="PS00164">
    <property type="entry name" value="ENOLASE"/>
    <property type="match status" value="1"/>
</dbReference>
<feature type="chain" id="PRO_0000133967" description="Enolase">
    <location>
        <begin position="1"/>
        <end position="434"/>
    </location>
</feature>
<feature type="active site" description="Proton donor" evidence="1">
    <location>
        <position position="207"/>
    </location>
</feature>
<feature type="active site" description="Proton acceptor" evidence="1">
    <location>
        <position position="343"/>
    </location>
</feature>
<feature type="binding site" evidence="1">
    <location>
        <position position="165"/>
    </location>
    <ligand>
        <name>(2R)-2-phosphoglycerate</name>
        <dbReference type="ChEBI" id="CHEBI:58289"/>
    </ligand>
</feature>
<feature type="binding site" evidence="1">
    <location>
        <position position="244"/>
    </location>
    <ligand>
        <name>Mg(2+)</name>
        <dbReference type="ChEBI" id="CHEBI:18420"/>
    </ligand>
</feature>
<feature type="binding site" evidence="1">
    <location>
        <position position="291"/>
    </location>
    <ligand>
        <name>Mg(2+)</name>
        <dbReference type="ChEBI" id="CHEBI:18420"/>
    </ligand>
</feature>
<feature type="binding site" evidence="1">
    <location>
        <position position="318"/>
    </location>
    <ligand>
        <name>Mg(2+)</name>
        <dbReference type="ChEBI" id="CHEBI:18420"/>
    </ligand>
</feature>
<feature type="binding site" evidence="1">
    <location>
        <position position="343"/>
    </location>
    <ligand>
        <name>(2R)-2-phosphoglycerate</name>
        <dbReference type="ChEBI" id="CHEBI:58289"/>
    </ligand>
</feature>
<feature type="binding site" evidence="1">
    <location>
        <position position="372"/>
    </location>
    <ligand>
        <name>(2R)-2-phosphoglycerate</name>
        <dbReference type="ChEBI" id="CHEBI:58289"/>
    </ligand>
</feature>
<feature type="binding site" evidence="1">
    <location>
        <position position="373"/>
    </location>
    <ligand>
        <name>(2R)-2-phosphoglycerate</name>
        <dbReference type="ChEBI" id="CHEBI:58289"/>
    </ligand>
</feature>
<feature type="binding site" evidence="1">
    <location>
        <position position="394"/>
    </location>
    <ligand>
        <name>(2R)-2-phosphoglycerate</name>
        <dbReference type="ChEBI" id="CHEBI:58289"/>
    </ligand>
</feature>
<protein>
    <recommendedName>
        <fullName evidence="1">Enolase</fullName>
        <ecNumber evidence="1">4.2.1.11</ecNumber>
    </recommendedName>
    <alternativeName>
        <fullName evidence="1">2-phospho-D-glycerate hydro-lyase</fullName>
    </alternativeName>
    <alternativeName>
        <fullName evidence="1">2-phosphoglycerate dehydratase</fullName>
    </alternativeName>
</protein>
<organism>
    <name type="scientific">Staphylococcus aureus (strain MRSA252)</name>
    <dbReference type="NCBI Taxonomy" id="282458"/>
    <lineage>
        <taxon>Bacteria</taxon>
        <taxon>Bacillati</taxon>
        <taxon>Bacillota</taxon>
        <taxon>Bacilli</taxon>
        <taxon>Bacillales</taxon>
        <taxon>Staphylococcaceae</taxon>
        <taxon>Staphylococcus</taxon>
    </lineage>
</organism>
<comment type="function">
    <text evidence="1">Catalyzes the reversible conversion of 2-phosphoglycerate (2-PG) into phosphoenolpyruvate (PEP). It is essential for the degradation of carbohydrates via glycolysis.</text>
</comment>
<comment type="catalytic activity">
    <reaction evidence="1">
        <text>(2R)-2-phosphoglycerate = phosphoenolpyruvate + H2O</text>
        <dbReference type="Rhea" id="RHEA:10164"/>
        <dbReference type="ChEBI" id="CHEBI:15377"/>
        <dbReference type="ChEBI" id="CHEBI:58289"/>
        <dbReference type="ChEBI" id="CHEBI:58702"/>
        <dbReference type="EC" id="4.2.1.11"/>
    </reaction>
</comment>
<comment type="cofactor">
    <cofactor evidence="1">
        <name>Mg(2+)</name>
        <dbReference type="ChEBI" id="CHEBI:18420"/>
    </cofactor>
    <text evidence="1">Binds a second Mg(2+) ion via substrate during catalysis.</text>
</comment>
<comment type="pathway">
    <text evidence="1">Carbohydrate degradation; glycolysis; pyruvate from D-glyceraldehyde 3-phosphate: step 4/5.</text>
</comment>
<comment type="subcellular location">
    <subcellularLocation>
        <location evidence="1">Cytoplasm</location>
    </subcellularLocation>
    <subcellularLocation>
        <location evidence="1">Secreted</location>
    </subcellularLocation>
    <subcellularLocation>
        <location evidence="1">Cell surface</location>
    </subcellularLocation>
    <text evidence="1">Fractions of enolase are present in both the cytoplasm and on the cell surface.</text>
</comment>
<comment type="similarity">
    <text evidence="1">Belongs to the enolase family.</text>
</comment>
<reference key="1">
    <citation type="journal article" date="2004" name="Proc. Natl. Acad. Sci. U.S.A.">
        <title>Complete genomes of two clinical Staphylococcus aureus strains: evidence for the rapid evolution of virulence and drug resistance.</title>
        <authorList>
            <person name="Holden M.T.G."/>
            <person name="Feil E.J."/>
            <person name="Lindsay J.A."/>
            <person name="Peacock S.J."/>
            <person name="Day N.P.J."/>
            <person name="Enright M.C."/>
            <person name="Foster T.J."/>
            <person name="Moore C.E."/>
            <person name="Hurst L."/>
            <person name="Atkin R."/>
            <person name="Barron A."/>
            <person name="Bason N."/>
            <person name="Bentley S.D."/>
            <person name="Chillingworth C."/>
            <person name="Chillingworth T."/>
            <person name="Churcher C."/>
            <person name="Clark L."/>
            <person name="Corton C."/>
            <person name="Cronin A."/>
            <person name="Doggett J."/>
            <person name="Dowd L."/>
            <person name="Feltwell T."/>
            <person name="Hance Z."/>
            <person name="Harris B."/>
            <person name="Hauser H."/>
            <person name="Holroyd S."/>
            <person name="Jagels K."/>
            <person name="James K.D."/>
            <person name="Lennard N."/>
            <person name="Line A."/>
            <person name="Mayes R."/>
            <person name="Moule S."/>
            <person name="Mungall K."/>
            <person name="Ormond D."/>
            <person name="Quail M.A."/>
            <person name="Rabbinowitsch E."/>
            <person name="Rutherford K.M."/>
            <person name="Sanders M."/>
            <person name="Sharp S."/>
            <person name="Simmonds M."/>
            <person name="Stevens K."/>
            <person name="Whitehead S."/>
            <person name="Barrell B.G."/>
            <person name="Spratt B.G."/>
            <person name="Parkhill J."/>
        </authorList>
    </citation>
    <scope>NUCLEOTIDE SEQUENCE [LARGE SCALE GENOMIC DNA]</scope>
    <source>
        <strain>MRSA252</strain>
    </source>
</reference>
<keyword id="KW-0963">Cytoplasm</keyword>
<keyword id="KW-0324">Glycolysis</keyword>
<keyword id="KW-0456">Lyase</keyword>
<keyword id="KW-0460">Magnesium</keyword>
<keyword id="KW-0479">Metal-binding</keyword>
<keyword id="KW-0964">Secreted</keyword>
<keyword id="KW-0843">Virulence</keyword>
<gene>
    <name evidence="1" type="primary">eno</name>
    <name type="ordered locus">SAR0832</name>
</gene>
<accession>Q6GIL4</accession>
<sequence>MPIITDVYAREVLDSRGNPTVEVEVLTESGAFGRALVPSGASTGEHEAVELRDGDKSRYLGKGVTKAVENVNEIIAPEIIEGEFSVLDQVSIDKMMIALDGTPNKGKLGANAILGVSIAVARAAADLLGQPLYKYLGGFNGKQLPVPMMNIVNGGSHSDAPIAFQEFMILPVGATTFKESLRWGTEIFHNLKSILSKRGLETAVGDEGGFAPKFEGTEDAVETIIQAIEAAGYKPGEEVFLGFDCASSEFYENGVYDYSKFEGEHGAKRTAAEQVDYLEQLVDKYPIITIEDGMDENDWDGWKQLTERIGDRVQLVGDDLFVTNTEILAKGIENGIGNSILIKVNQIGTLTETFDAIEMAQKAGYTAVVSHRSGETEDTTIADIAVATNAGQIKTGSLSRTDRIAKYNQLLRIEDELFETAKYDGIKSFYNLDK</sequence>
<name>ENO_STAAR</name>
<evidence type="ECO:0000255" key="1">
    <source>
        <dbReference type="HAMAP-Rule" id="MF_00318"/>
    </source>
</evidence>
<proteinExistence type="inferred from homology"/>